<keyword id="KW-1185">Reference proteome</keyword>
<keyword id="KW-0687">Ribonucleoprotein</keyword>
<keyword id="KW-0689">Ribosomal protein</keyword>
<reference key="1">
    <citation type="submission" date="2006-12" db="EMBL/GenBank/DDBJ databases">
        <title>Complete sequence of Chlorobium phaeobacteroides DSM 266.</title>
        <authorList>
            <consortium name="US DOE Joint Genome Institute"/>
            <person name="Copeland A."/>
            <person name="Lucas S."/>
            <person name="Lapidus A."/>
            <person name="Barry K."/>
            <person name="Detter J.C."/>
            <person name="Glavina del Rio T."/>
            <person name="Hammon N."/>
            <person name="Israni S."/>
            <person name="Pitluck S."/>
            <person name="Goltsman E."/>
            <person name="Schmutz J."/>
            <person name="Larimer F."/>
            <person name="Land M."/>
            <person name="Hauser L."/>
            <person name="Mikhailova N."/>
            <person name="Li T."/>
            <person name="Overmann J."/>
            <person name="Bryant D.A."/>
            <person name="Richardson P."/>
        </authorList>
    </citation>
    <scope>NUCLEOTIDE SEQUENCE [LARGE SCALE GENOMIC DNA]</scope>
    <source>
        <strain>DSM 266 / SMG 266 / 2430</strain>
    </source>
</reference>
<evidence type="ECO:0000255" key="1">
    <source>
        <dbReference type="HAMAP-Rule" id="MF_00291"/>
    </source>
</evidence>
<evidence type="ECO:0000305" key="2"/>
<organism>
    <name type="scientific">Chlorobium phaeobacteroides (strain DSM 266 / SMG 266 / 2430)</name>
    <dbReference type="NCBI Taxonomy" id="290317"/>
    <lineage>
        <taxon>Bacteria</taxon>
        <taxon>Pseudomonadati</taxon>
        <taxon>Chlorobiota</taxon>
        <taxon>Chlorobiia</taxon>
        <taxon>Chlorobiales</taxon>
        <taxon>Chlorobiaceae</taxon>
        <taxon>Chlorobium/Pelodictyon group</taxon>
        <taxon>Chlorobium</taxon>
    </lineage>
</organism>
<name>RS2_CHLPD</name>
<proteinExistence type="inferred from homology"/>
<gene>
    <name evidence="1" type="primary">rpsB</name>
    <name type="ordered locus">Cpha266_2010</name>
</gene>
<feature type="chain" id="PRO_1000003928" description="Small ribosomal subunit protein uS2">
    <location>
        <begin position="1"/>
        <end position="252"/>
    </location>
</feature>
<comment type="similarity">
    <text evidence="1">Belongs to the universal ribosomal protein uS2 family.</text>
</comment>
<accession>A1BHZ5</accession>
<protein>
    <recommendedName>
        <fullName evidence="1">Small ribosomal subunit protein uS2</fullName>
    </recommendedName>
    <alternativeName>
        <fullName evidence="2">30S ribosomal protein S2</fullName>
    </alternativeName>
</protein>
<sequence length="252" mass="28354">MSRFQLEEMLRAGVHFGHLARRWCPKMKPYIFMEKNGVHIIDLQKTLVLADDALNALEAIAQTGREIMFVGTKKQAKRIISAEAERAGMPYVCERWLGGMLTNFSTIRQSIRRMNSIDRMETDGTFDMITKKERLMLVREKEKLMRILGGIATMTRLPAALFVVDIKKEHIAIKEARSLGIPIFAMVDTNCDPELVDFIIPANDDAIRSIQLMVKAVADTIVNSRELKVEQEVLAGMDEEDGDAVEGDAAGE</sequence>
<dbReference type="EMBL" id="CP000492">
    <property type="protein sequence ID" value="ABL66022.1"/>
    <property type="molecule type" value="Genomic_DNA"/>
</dbReference>
<dbReference type="RefSeq" id="WP_011745826.1">
    <property type="nucleotide sequence ID" value="NC_008639.1"/>
</dbReference>
<dbReference type="SMR" id="A1BHZ5"/>
<dbReference type="STRING" id="290317.Cpha266_2010"/>
<dbReference type="KEGG" id="cph:Cpha266_2010"/>
<dbReference type="eggNOG" id="COG0052">
    <property type="taxonomic scope" value="Bacteria"/>
</dbReference>
<dbReference type="HOGENOM" id="CLU_040318_1_3_10"/>
<dbReference type="OrthoDB" id="9808036at2"/>
<dbReference type="Proteomes" id="UP000008701">
    <property type="component" value="Chromosome"/>
</dbReference>
<dbReference type="GO" id="GO:0022627">
    <property type="term" value="C:cytosolic small ribosomal subunit"/>
    <property type="evidence" value="ECO:0007669"/>
    <property type="project" value="TreeGrafter"/>
</dbReference>
<dbReference type="GO" id="GO:0003735">
    <property type="term" value="F:structural constituent of ribosome"/>
    <property type="evidence" value="ECO:0007669"/>
    <property type="project" value="InterPro"/>
</dbReference>
<dbReference type="GO" id="GO:0006412">
    <property type="term" value="P:translation"/>
    <property type="evidence" value="ECO:0007669"/>
    <property type="project" value="UniProtKB-UniRule"/>
</dbReference>
<dbReference type="CDD" id="cd01425">
    <property type="entry name" value="RPS2"/>
    <property type="match status" value="1"/>
</dbReference>
<dbReference type="FunFam" id="1.10.287.610:FF:000001">
    <property type="entry name" value="30S ribosomal protein S2"/>
    <property type="match status" value="1"/>
</dbReference>
<dbReference type="Gene3D" id="3.40.50.10490">
    <property type="entry name" value="Glucose-6-phosphate isomerase like protein, domain 1"/>
    <property type="match status" value="1"/>
</dbReference>
<dbReference type="Gene3D" id="1.10.287.610">
    <property type="entry name" value="Helix hairpin bin"/>
    <property type="match status" value="1"/>
</dbReference>
<dbReference type="HAMAP" id="MF_00291_B">
    <property type="entry name" value="Ribosomal_uS2_B"/>
    <property type="match status" value="1"/>
</dbReference>
<dbReference type="InterPro" id="IPR001865">
    <property type="entry name" value="Ribosomal_uS2"/>
</dbReference>
<dbReference type="InterPro" id="IPR005706">
    <property type="entry name" value="Ribosomal_uS2_bac/mit/plastid"/>
</dbReference>
<dbReference type="InterPro" id="IPR018130">
    <property type="entry name" value="Ribosomal_uS2_CS"/>
</dbReference>
<dbReference type="InterPro" id="IPR023591">
    <property type="entry name" value="Ribosomal_uS2_flav_dom_sf"/>
</dbReference>
<dbReference type="NCBIfam" id="TIGR01011">
    <property type="entry name" value="rpsB_bact"/>
    <property type="match status" value="1"/>
</dbReference>
<dbReference type="PANTHER" id="PTHR12534">
    <property type="entry name" value="30S RIBOSOMAL PROTEIN S2 PROKARYOTIC AND ORGANELLAR"/>
    <property type="match status" value="1"/>
</dbReference>
<dbReference type="PANTHER" id="PTHR12534:SF0">
    <property type="entry name" value="SMALL RIBOSOMAL SUBUNIT PROTEIN US2M"/>
    <property type="match status" value="1"/>
</dbReference>
<dbReference type="Pfam" id="PF00318">
    <property type="entry name" value="Ribosomal_S2"/>
    <property type="match status" value="1"/>
</dbReference>
<dbReference type="PRINTS" id="PR00395">
    <property type="entry name" value="RIBOSOMALS2"/>
</dbReference>
<dbReference type="SUPFAM" id="SSF52313">
    <property type="entry name" value="Ribosomal protein S2"/>
    <property type="match status" value="1"/>
</dbReference>
<dbReference type="PROSITE" id="PS00962">
    <property type="entry name" value="RIBOSOMAL_S2_1"/>
    <property type="match status" value="1"/>
</dbReference>
<dbReference type="PROSITE" id="PS00963">
    <property type="entry name" value="RIBOSOMAL_S2_2"/>
    <property type="match status" value="1"/>
</dbReference>